<keyword id="KW-0025">Alternative splicing</keyword>
<keyword id="KW-0597">Phosphoprotein</keyword>
<keyword id="KW-1185">Reference proteome</keyword>
<gene>
    <name type="primary">Gpatch2l</name>
    <name type="synonym">Kiaa1152</name>
</gene>
<name>GPT2L_MOUSE</name>
<proteinExistence type="evidence at protein level"/>
<organism>
    <name type="scientific">Mus musculus</name>
    <name type="common">Mouse</name>
    <dbReference type="NCBI Taxonomy" id="10090"/>
    <lineage>
        <taxon>Eukaryota</taxon>
        <taxon>Metazoa</taxon>
        <taxon>Chordata</taxon>
        <taxon>Craniata</taxon>
        <taxon>Vertebrata</taxon>
        <taxon>Euteleostomi</taxon>
        <taxon>Mammalia</taxon>
        <taxon>Eutheria</taxon>
        <taxon>Euarchontoglires</taxon>
        <taxon>Glires</taxon>
        <taxon>Rodentia</taxon>
        <taxon>Myomorpha</taxon>
        <taxon>Muroidea</taxon>
        <taxon>Muridae</taxon>
        <taxon>Murinae</taxon>
        <taxon>Mus</taxon>
        <taxon>Mus</taxon>
    </lineage>
</organism>
<dbReference type="EMBL" id="AK006185">
    <property type="protein sequence ID" value="BAB24446.1"/>
    <property type="molecule type" value="mRNA"/>
</dbReference>
<dbReference type="EMBL" id="AK031712">
    <property type="protein sequence ID" value="BAC27527.1"/>
    <property type="molecule type" value="mRNA"/>
</dbReference>
<dbReference type="EMBL" id="AK129299">
    <property type="protein sequence ID" value="BAC98109.1"/>
    <property type="status" value="ALT_INIT"/>
    <property type="molecule type" value="mRNA"/>
</dbReference>
<dbReference type="EMBL" id="BC048169">
    <property type="protein sequence ID" value="AAH48169.1"/>
    <property type="molecule type" value="mRNA"/>
</dbReference>
<dbReference type="EMBL" id="BC058256">
    <property type="protein sequence ID" value="AAH58256.1"/>
    <property type="molecule type" value="mRNA"/>
</dbReference>
<dbReference type="CCDS" id="CCDS26065.1">
    <molecule id="Q6PE65-1"/>
</dbReference>
<dbReference type="CCDS" id="CCDS88376.1">
    <molecule id="Q6PE65-2"/>
</dbReference>
<dbReference type="RefSeq" id="NP_001311417.1">
    <molecule id="Q6PE65-2"/>
    <property type="nucleotide sequence ID" value="NM_001324488.1"/>
</dbReference>
<dbReference type="RefSeq" id="NP_081681.2">
    <molecule id="Q6PE65-1"/>
    <property type="nucleotide sequence ID" value="NM_027405.3"/>
</dbReference>
<dbReference type="BioGRID" id="214009">
    <property type="interactions" value="1"/>
</dbReference>
<dbReference type="FunCoup" id="Q6PE65">
    <property type="interactions" value="2734"/>
</dbReference>
<dbReference type="STRING" id="10090.ENSMUSP00000152284"/>
<dbReference type="iPTMnet" id="Q6PE65"/>
<dbReference type="PhosphoSitePlus" id="Q6PE65"/>
<dbReference type="jPOST" id="Q6PE65"/>
<dbReference type="PaxDb" id="10090-ENSMUSP00000065858"/>
<dbReference type="ProteomicsDB" id="271079">
    <molecule id="Q6PE65-1"/>
</dbReference>
<dbReference type="ProteomicsDB" id="271080">
    <molecule id="Q6PE65-2"/>
</dbReference>
<dbReference type="Antibodypedia" id="109">
    <property type="antibodies" value="24 antibodies from 10 providers"/>
</dbReference>
<dbReference type="DNASU" id="70373"/>
<dbReference type="Ensembl" id="ENSMUST00000071106.6">
    <molecule id="Q6PE65-2"/>
    <property type="protein sequence ID" value="ENSMUSP00000065858.6"/>
    <property type="gene ID" value="ENSMUSG00000021254.10"/>
</dbReference>
<dbReference type="Ensembl" id="ENSMUST00000221368.2">
    <molecule id="Q6PE65-1"/>
    <property type="protein sequence ID" value="ENSMUSP00000152284.2"/>
    <property type="gene ID" value="ENSMUSG00000021254.10"/>
</dbReference>
<dbReference type="GeneID" id="70373"/>
<dbReference type="KEGG" id="mmu:70373"/>
<dbReference type="UCSC" id="uc007ohr.1">
    <molecule id="Q6PE65-1"/>
    <property type="organism name" value="mouse"/>
</dbReference>
<dbReference type="UCSC" id="uc007ohs.1">
    <molecule id="Q6PE65-2"/>
    <property type="organism name" value="mouse"/>
</dbReference>
<dbReference type="AGR" id="MGI:1917623"/>
<dbReference type="CTD" id="55668"/>
<dbReference type="MGI" id="MGI:1917623">
    <property type="gene designation" value="Gpatch2l"/>
</dbReference>
<dbReference type="VEuPathDB" id="HostDB:ENSMUSG00000021254"/>
<dbReference type="eggNOG" id="KOG0154">
    <property type="taxonomic scope" value="Eukaryota"/>
</dbReference>
<dbReference type="GeneTree" id="ENSGT00410000025698"/>
<dbReference type="HOGENOM" id="CLU_041240_0_1_1"/>
<dbReference type="InParanoid" id="Q6PE65"/>
<dbReference type="OMA" id="YQRDFWL"/>
<dbReference type="OrthoDB" id="6095487at2759"/>
<dbReference type="PhylomeDB" id="Q6PE65"/>
<dbReference type="TreeFam" id="TF331954"/>
<dbReference type="BioGRID-ORCS" id="70373">
    <property type="hits" value="1 hit in 76 CRISPR screens"/>
</dbReference>
<dbReference type="ChiTaRS" id="Gpatch2l">
    <property type="organism name" value="mouse"/>
</dbReference>
<dbReference type="PRO" id="PR:Q6PE65"/>
<dbReference type="Proteomes" id="UP000000589">
    <property type="component" value="Chromosome 12"/>
</dbReference>
<dbReference type="RNAct" id="Q6PE65">
    <property type="molecule type" value="protein"/>
</dbReference>
<dbReference type="Bgee" id="ENSMUSG00000021254">
    <property type="expression patterns" value="Expressed in lumbar subsegment of spinal cord and 229 other cell types or tissues"/>
</dbReference>
<dbReference type="InterPro" id="IPR051189">
    <property type="entry name" value="Splicing_assoc_domain"/>
</dbReference>
<dbReference type="PANTHER" id="PTHR14195">
    <property type="entry name" value="G PATCH DOMAIN CONTAINING PROTEIN 2"/>
    <property type="match status" value="1"/>
</dbReference>
<evidence type="ECO:0000250" key="1">
    <source>
        <dbReference type="UniProtKB" id="Q9NWQ4"/>
    </source>
</evidence>
<evidence type="ECO:0000256" key="2">
    <source>
        <dbReference type="SAM" id="MobiDB-lite"/>
    </source>
</evidence>
<evidence type="ECO:0000303" key="3">
    <source>
    </source>
</evidence>
<evidence type="ECO:0000305" key="4"/>
<evidence type="ECO:0007744" key="5">
    <source>
    </source>
</evidence>
<protein>
    <recommendedName>
        <fullName>G patch domain-containing protein 2-like</fullName>
    </recommendedName>
</protein>
<reference key="1">
    <citation type="journal article" date="2005" name="Science">
        <title>The transcriptional landscape of the mammalian genome.</title>
        <authorList>
            <person name="Carninci P."/>
            <person name="Kasukawa T."/>
            <person name="Katayama S."/>
            <person name="Gough J."/>
            <person name="Frith M.C."/>
            <person name="Maeda N."/>
            <person name="Oyama R."/>
            <person name="Ravasi T."/>
            <person name="Lenhard B."/>
            <person name="Wells C."/>
            <person name="Kodzius R."/>
            <person name="Shimokawa K."/>
            <person name="Bajic V.B."/>
            <person name="Brenner S.E."/>
            <person name="Batalov S."/>
            <person name="Forrest A.R."/>
            <person name="Zavolan M."/>
            <person name="Davis M.J."/>
            <person name="Wilming L.G."/>
            <person name="Aidinis V."/>
            <person name="Allen J.E."/>
            <person name="Ambesi-Impiombato A."/>
            <person name="Apweiler R."/>
            <person name="Aturaliya R.N."/>
            <person name="Bailey T.L."/>
            <person name="Bansal M."/>
            <person name="Baxter L."/>
            <person name="Beisel K.W."/>
            <person name="Bersano T."/>
            <person name="Bono H."/>
            <person name="Chalk A.M."/>
            <person name="Chiu K.P."/>
            <person name="Choudhary V."/>
            <person name="Christoffels A."/>
            <person name="Clutterbuck D.R."/>
            <person name="Crowe M.L."/>
            <person name="Dalla E."/>
            <person name="Dalrymple B.P."/>
            <person name="de Bono B."/>
            <person name="Della Gatta G."/>
            <person name="di Bernardo D."/>
            <person name="Down T."/>
            <person name="Engstrom P."/>
            <person name="Fagiolini M."/>
            <person name="Faulkner G."/>
            <person name="Fletcher C.F."/>
            <person name="Fukushima T."/>
            <person name="Furuno M."/>
            <person name="Futaki S."/>
            <person name="Gariboldi M."/>
            <person name="Georgii-Hemming P."/>
            <person name="Gingeras T.R."/>
            <person name="Gojobori T."/>
            <person name="Green R.E."/>
            <person name="Gustincich S."/>
            <person name="Harbers M."/>
            <person name="Hayashi Y."/>
            <person name="Hensch T.K."/>
            <person name="Hirokawa N."/>
            <person name="Hill D."/>
            <person name="Huminiecki L."/>
            <person name="Iacono M."/>
            <person name="Ikeo K."/>
            <person name="Iwama A."/>
            <person name="Ishikawa T."/>
            <person name="Jakt M."/>
            <person name="Kanapin A."/>
            <person name="Katoh M."/>
            <person name="Kawasawa Y."/>
            <person name="Kelso J."/>
            <person name="Kitamura H."/>
            <person name="Kitano H."/>
            <person name="Kollias G."/>
            <person name="Krishnan S.P."/>
            <person name="Kruger A."/>
            <person name="Kummerfeld S.K."/>
            <person name="Kurochkin I.V."/>
            <person name="Lareau L.F."/>
            <person name="Lazarevic D."/>
            <person name="Lipovich L."/>
            <person name="Liu J."/>
            <person name="Liuni S."/>
            <person name="McWilliam S."/>
            <person name="Madan Babu M."/>
            <person name="Madera M."/>
            <person name="Marchionni L."/>
            <person name="Matsuda H."/>
            <person name="Matsuzawa S."/>
            <person name="Miki H."/>
            <person name="Mignone F."/>
            <person name="Miyake S."/>
            <person name="Morris K."/>
            <person name="Mottagui-Tabar S."/>
            <person name="Mulder N."/>
            <person name="Nakano N."/>
            <person name="Nakauchi H."/>
            <person name="Ng P."/>
            <person name="Nilsson R."/>
            <person name="Nishiguchi S."/>
            <person name="Nishikawa S."/>
            <person name="Nori F."/>
            <person name="Ohara O."/>
            <person name="Okazaki Y."/>
            <person name="Orlando V."/>
            <person name="Pang K.C."/>
            <person name="Pavan W.J."/>
            <person name="Pavesi G."/>
            <person name="Pesole G."/>
            <person name="Petrovsky N."/>
            <person name="Piazza S."/>
            <person name="Reed J."/>
            <person name="Reid J.F."/>
            <person name="Ring B.Z."/>
            <person name="Ringwald M."/>
            <person name="Rost B."/>
            <person name="Ruan Y."/>
            <person name="Salzberg S.L."/>
            <person name="Sandelin A."/>
            <person name="Schneider C."/>
            <person name="Schoenbach C."/>
            <person name="Sekiguchi K."/>
            <person name="Semple C.A."/>
            <person name="Seno S."/>
            <person name="Sessa L."/>
            <person name="Sheng Y."/>
            <person name="Shibata Y."/>
            <person name="Shimada H."/>
            <person name="Shimada K."/>
            <person name="Silva D."/>
            <person name="Sinclair B."/>
            <person name="Sperling S."/>
            <person name="Stupka E."/>
            <person name="Sugiura K."/>
            <person name="Sultana R."/>
            <person name="Takenaka Y."/>
            <person name="Taki K."/>
            <person name="Tammoja K."/>
            <person name="Tan S.L."/>
            <person name="Tang S."/>
            <person name="Taylor M.S."/>
            <person name="Tegner J."/>
            <person name="Teichmann S.A."/>
            <person name="Ueda H.R."/>
            <person name="van Nimwegen E."/>
            <person name="Verardo R."/>
            <person name="Wei C.L."/>
            <person name="Yagi K."/>
            <person name="Yamanishi H."/>
            <person name="Zabarovsky E."/>
            <person name="Zhu S."/>
            <person name="Zimmer A."/>
            <person name="Hide W."/>
            <person name="Bult C."/>
            <person name="Grimmond S.M."/>
            <person name="Teasdale R.D."/>
            <person name="Liu E.T."/>
            <person name="Brusic V."/>
            <person name="Quackenbush J."/>
            <person name="Wahlestedt C."/>
            <person name="Mattick J.S."/>
            <person name="Hume D.A."/>
            <person name="Kai C."/>
            <person name="Sasaki D."/>
            <person name="Tomaru Y."/>
            <person name="Fukuda S."/>
            <person name="Kanamori-Katayama M."/>
            <person name="Suzuki M."/>
            <person name="Aoki J."/>
            <person name="Arakawa T."/>
            <person name="Iida J."/>
            <person name="Imamura K."/>
            <person name="Itoh M."/>
            <person name="Kato T."/>
            <person name="Kawaji H."/>
            <person name="Kawagashira N."/>
            <person name="Kawashima T."/>
            <person name="Kojima M."/>
            <person name="Kondo S."/>
            <person name="Konno H."/>
            <person name="Nakano K."/>
            <person name="Ninomiya N."/>
            <person name="Nishio T."/>
            <person name="Okada M."/>
            <person name="Plessy C."/>
            <person name="Shibata K."/>
            <person name="Shiraki T."/>
            <person name="Suzuki S."/>
            <person name="Tagami M."/>
            <person name="Waki K."/>
            <person name="Watahiki A."/>
            <person name="Okamura-Oho Y."/>
            <person name="Suzuki H."/>
            <person name="Kawai J."/>
            <person name="Hayashizaki Y."/>
        </authorList>
    </citation>
    <scope>NUCLEOTIDE SEQUENCE [LARGE SCALE MRNA] (ISOFORM 2)</scope>
    <source>
        <strain>C57BL/6J</strain>
        <tissue>Embryonic testis</tissue>
        <tissue>Testis</tissue>
    </source>
</reference>
<reference key="2">
    <citation type="journal article" date="2003" name="DNA Res.">
        <title>Prediction of the coding sequences of mouse homologues of KIAA gene: III. The complete nucleotide sequences of 500 mouse KIAA-homologous cDNAs identified by screening of terminal sequences of cDNA clones randomly sampled from size-fractionated libraries.</title>
        <authorList>
            <person name="Okazaki N."/>
            <person name="Kikuno R."/>
            <person name="Ohara R."/>
            <person name="Inamoto S."/>
            <person name="Koseki H."/>
            <person name="Hiraoka S."/>
            <person name="Saga Y."/>
            <person name="Nagase T."/>
            <person name="Ohara O."/>
            <person name="Koga H."/>
        </authorList>
    </citation>
    <scope>NUCLEOTIDE SEQUENCE [LARGE SCALE MRNA] (ISOFORM 1)</scope>
    <source>
        <tissue>Fetal brain</tissue>
    </source>
</reference>
<reference key="3">
    <citation type="journal article" date="2004" name="Genome Res.">
        <title>The status, quality, and expansion of the NIH full-length cDNA project: the Mammalian Gene Collection (MGC).</title>
        <authorList>
            <consortium name="The MGC Project Team"/>
        </authorList>
    </citation>
    <scope>NUCLEOTIDE SEQUENCE [LARGE SCALE MRNA] (ISOFORM 1)</scope>
    <source>
        <strain>C57BL/6J</strain>
        <tissue>Embryonic brain</tissue>
        <tissue>Eye</tissue>
    </source>
</reference>
<reference key="4">
    <citation type="journal article" date="2010" name="Cell">
        <title>A tissue-specific atlas of mouse protein phosphorylation and expression.</title>
        <authorList>
            <person name="Huttlin E.L."/>
            <person name="Jedrychowski M.P."/>
            <person name="Elias J.E."/>
            <person name="Goswami T."/>
            <person name="Rad R."/>
            <person name="Beausoleil S.A."/>
            <person name="Villen J."/>
            <person name="Haas W."/>
            <person name="Sowa M.E."/>
            <person name="Gygi S.P."/>
        </authorList>
    </citation>
    <scope>PHOSPHORYLATION [LARGE SCALE ANALYSIS] AT SER-31; SER-86 AND SER-88</scope>
    <scope>IDENTIFICATION BY MASS SPECTROMETRY [LARGE SCALE ANALYSIS]</scope>
    <source>
        <tissue>Brain</tissue>
        <tissue>Brown adipose tissue</tissue>
        <tissue>Kidney</tissue>
        <tissue>Liver</tissue>
        <tissue>Lung</tissue>
        <tissue>Pancreas</tissue>
        <tissue>Spleen</tissue>
        <tissue>Testis</tissue>
    </source>
</reference>
<sequence>MDELVHDLASALEQTSEQSKLGELWEEMALSPRQQRRQLRKRRGRKRRSDFTHLAEHACCFSEASESSLDEATKDCREVAPLTNFSDSDDTVVAKRHPALSAIIRGKQHSWPESDSFTENAPCRPLRRRRKVKRVTSEVAASLQQKLKVSDWSYERGCRFKSAKKQRLSRWKENTPWTSSGHGLCESAENRTFLSQPGRKERMECEAEEQKHGSDENMSECDTSSVCSSSDTGLFTNDEGRQGDDEQSDWFYEGECVPGFTVHNLLPKWAPDHCTEVERMDSGLDKLSDPTFLLPSRPAQRGYHGRLNRLPGAAARCLRKGRRRLPGKEASMSSLGTERIGHTISDPRQTDFWLPSAGKRERNQFNPLSPLYSLDVLADASHRRCSPAHCSARQASVHWGPPCPRDIKRKRKPVASASFSSPSPVHPDVLEPAIPAQKPPDSEWLDGTSAAEKATAFPPATFFKMPQEKNSGCSSSPGTNGC</sequence>
<accession>Q6PE65</accession>
<accession>Q6ZPW9</accession>
<accession>Q8CD08</accession>
<accession>Q9DA49</accession>
<feature type="chain" id="PRO_0000089928" description="G patch domain-containing protein 2-like">
    <location>
        <begin position="1"/>
        <end position="482"/>
    </location>
</feature>
<feature type="region of interest" description="Disordered" evidence="2">
    <location>
        <begin position="195"/>
        <end position="222"/>
    </location>
</feature>
<feature type="region of interest" description="Disordered" evidence="2">
    <location>
        <begin position="408"/>
        <end position="482"/>
    </location>
</feature>
<feature type="compositionally biased region" description="Basic and acidic residues" evidence="2">
    <location>
        <begin position="198"/>
        <end position="215"/>
    </location>
</feature>
<feature type="compositionally biased region" description="Low complexity" evidence="2">
    <location>
        <begin position="414"/>
        <end position="427"/>
    </location>
</feature>
<feature type="compositionally biased region" description="Polar residues" evidence="2">
    <location>
        <begin position="468"/>
        <end position="482"/>
    </location>
</feature>
<feature type="modified residue" description="Phosphoserine" evidence="5">
    <location>
        <position position="31"/>
    </location>
</feature>
<feature type="modified residue" description="Phosphoserine" evidence="5">
    <location>
        <position position="86"/>
    </location>
</feature>
<feature type="modified residue" description="Phosphoserine" evidence="5">
    <location>
        <position position="88"/>
    </location>
</feature>
<feature type="modified residue" description="Phosphothreonine" evidence="1">
    <location>
        <position position="91"/>
    </location>
</feature>
<feature type="splice variant" id="VSP_014717" description="In isoform 2." evidence="3">
    <original>RQASVHWGPPCPRDIKRKRKPVASASFSSPSPVHPDVLEPAIPAQKPPDSEWLDGTSAAEKATAFPPATFFKMPQEKNSGCSSSPGTNGC</original>
    <variation>SAPRCSGAGHPSSEAS</variation>
    <location>
        <begin position="393"/>
        <end position="482"/>
    </location>
</feature>
<feature type="sequence conflict" description="In Ref. 1; BAB24446." evidence="4" ref="1">
    <original>D</original>
    <variation>E</variation>
    <location>
        <position position="7"/>
    </location>
</feature>
<feature type="sequence conflict" description="In Ref. 1; BAB24446." evidence="4" ref="1">
    <original>H</original>
    <variation>N</variation>
    <location>
        <position position="109"/>
    </location>
</feature>
<feature type="sequence conflict" description="In Ref. 1; BAB24446." evidence="4" ref="1">
    <original>I</original>
    <variation>N</variation>
    <location>
        <position position="344"/>
    </location>
</feature>
<comment type="alternative products">
    <event type="alternative splicing"/>
    <isoform>
        <id>Q6PE65-1</id>
        <name>1</name>
        <sequence type="displayed"/>
    </isoform>
    <isoform>
        <id>Q6PE65-2</id>
        <name>2</name>
        <sequence type="described" ref="VSP_014717"/>
    </isoform>
</comment>
<comment type="sequence caution" evidence="4">
    <conflict type="erroneous initiation">
        <sequence resource="EMBL-CDS" id="BAC98109"/>
    </conflict>
    <text>Extended N-terminus.</text>
</comment>